<dbReference type="EC" id="1.15.1.1"/>
<dbReference type="EMBL" id="LT708304">
    <property type="protein sequence ID" value="SIT99025.1"/>
    <property type="molecule type" value="Genomic_DNA"/>
</dbReference>
<dbReference type="RefSeq" id="NP_854103.1">
    <property type="nucleotide sequence ID" value="NC_002945.3"/>
</dbReference>
<dbReference type="RefSeq" id="WP_003402198.1">
    <property type="nucleotide sequence ID" value="NC_002945.4"/>
</dbReference>
<dbReference type="PDB" id="7ALX">
    <property type="method" value="X-ray"/>
    <property type="resolution" value="1.80 A"/>
    <property type="chains" value="AAA/BBB=196-230"/>
</dbReference>
<dbReference type="PDB" id="7B74">
    <property type="method" value="X-ray"/>
    <property type="resolution" value="1.85 A"/>
    <property type="chains" value="AAA/BBB/CCC/DDD=196-230"/>
</dbReference>
<dbReference type="PDBsum" id="7ALX"/>
<dbReference type="PDBsum" id="7B74"/>
<dbReference type="SMR" id="P0A609"/>
<dbReference type="PATRIC" id="fig|233413.5.peg.479"/>
<dbReference type="Proteomes" id="UP000001419">
    <property type="component" value="Chromosome"/>
</dbReference>
<dbReference type="GO" id="GO:0005886">
    <property type="term" value="C:plasma membrane"/>
    <property type="evidence" value="ECO:0007669"/>
    <property type="project" value="UniProtKB-SubCell"/>
</dbReference>
<dbReference type="GO" id="GO:0005507">
    <property type="term" value="F:copper ion binding"/>
    <property type="evidence" value="ECO:0007669"/>
    <property type="project" value="InterPro"/>
</dbReference>
<dbReference type="GO" id="GO:0004784">
    <property type="term" value="F:superoxide dismutase activity"/>
    <property type="evidence" value="ECO:0007669"/>
    <property type="project" value="UniProtKB-EC"/>
</dbReference>
<dbReference type="CDD" id="cd00305">
    <property type="entry name" value="Cu-Zn_Superoxide_Dismutase"/>
    <property type="match status" value="1"/>
</dbReference>
<dbReference type="FunFam" id="2.60.40.200:FF:000012">
    <property type="entry name" value="Superoxide dismutase [Cu-Zn]"/>
    <property type="match status" value="1"/>
</dbReference>
<dbReference type="Gene3D" id="2.60.40.200">
    <property type="entry name" value="Superoxide dismutase, copper/zinc binding domain"/>
    <property type="match status" value="1"/>
</dbReference>
<dbReference type="InterPro" id="IPR036423">
    <property type="entry name" value="SOD-like_Cu/Zn_dom_sf"/>
</dbReference>
<dbReference type="InterPro" id="IPR024134">
    <property type="entry name" value="SOD_Cu/Zn_/chaperone"/>
</dbReference>
<dbReference type="InterPro" id="IPR018152">
    <property type="entry name" value="SOD_Cu/Zn_BS"/>
</dbReference>
<dbReference type="InterPro" id="IPR001424">
    <property type="entry name" value="SOD_Cu_Zn_dom"/>
</dbReference>
<dbReference type="NCBIfam" id="NF047631">
    <property type="entry name" value="SodCMycob"/>
    <property type="match status" value="1"/>
</dbReference>
<dbReference type="PANTHER" id="PTHR10003">
    <property type="entry name" value="SUPEROXIDE DISMUTASE CU-ZN -RELATED"/>
    <property type="match status" value="1"/>
</dbReference>
<dbReference type="Pfam" id="PF00080">
    <property type="entry name" value="Sod_Cu"/>
    <property type="match status" value="1"/>
</dbReference>
<dbReference type="SUPFAM" id="SSF49329">
    <property type="entry name" value="Cu,Zn superoxide dismutase-like"/>
    <property type="match status" value="1"/>
</dbReference>
<dbReference type="PROSITE" id="PS51257">
    <property type="entry name" value="PROKAR_LIPOPROTEIN"/>
    <property type="match status" value="1"/>
</dbReference>
<dbReference type="PROSITE" id="PS00332">
    <property type="entry name" value="SOD_CU_ZN_2"/>
    <property type="match status" value="1"/>
</dbReference>
<proteinExistence type="evidence at protein level"/>
<name>SODC_MYCBO</name>
<organism>
    <name type="scientific">Mycobacterium bovis (strain ATCC BAA-935 / AF2122/97)</name>
    <dbReference type="NCBI Taxonomy" id="233413"/>
    <lineage>
        <taxon>Bacteria</taxon>
        <taxon>Bacillati</taxon>
        <taxon>Actinomycetota</taxon>
        <taxon>Actinomycetes</taxon>
        <taxon>Mycobacteriales</taxon>
        <taxon>Mycobacteriaceae</taxon>
        <taxon>Mycobacterium</taxon>
        <taxon>Mycobacterium tuberculosis complex</taxon>
    </lineage>
</organism>
<keyword id="KW-0002">3D-structure</keyword>
<keyword id="KW-0049">Antioxidant</keyword>
<keyword id="KW-1003">Cell membrane</keyword>
<keyword id="KW-0186">Copper</keyword>
<keyword id="KW-1015">Disulfide bond</keyword>
<keyword id="KW-0449">Lipoprotein</keyword>
<keyword id="KW-0472">Membrane</keyword>
<keyword id="KW-0479">Metal-binding</keyword>
<keyword id="KW-0560">Oxidoreductase</keyword>
<keyword id="KW-0564">Palmitate</keyword>
<keyword id="KW-1185">Reference proteome</keyword>
<keyword id="KW-0732">Signal</keyword>
<keyword id="KW-0862">Zinc</keyword>
<sequence length="240" mass="23844">MPKPADHRNHAAVSTSVLSALFLGAGAALLSACSSPQHASTVPGTTPSIWTGSPAPSGLSGHDEESPGAQSLTSTLTAPDGTKVATAKFEFANGYATVTIATTGVGKLTPGFHGLHIHQVGKCEPNSVAPTGGAPGNFLSAGGHYHVPGHTGTPASGDLASLQVRGDGSAMLVTTTDAFTMDDLLSGAKTAIIIHAGADNFANIPPERYVQVNGTPGPDETTLTTGDAGKRVACGVIGSG</sequence>
<reference key="1">
    <citation type="journal article" date="2003" name="Proc. Natl. Acad. Sci. U.S.A.">
        <title>The complete genome sequence of Mycobacterium bovis.</title>
        <authorList>
            <person name="Garnier T."/>
            <person name="Eiglmeier K."/>
            <person name="Camus J.-C."/>
            <person name="Medina N."/>
            <person name="Mansoor H."/>
            <person name="Pryor M."/>
            <person name="Duthoy S."/>
            <person name="Grondin S."/>
            <person name="Lacroix C."/>
            <person name="Monsempe C."/>
            <person name="Simon S."/>
            <person name="Harris B."/>
            <person name="Atkin R."/>
            <person name="Doggett J."/>
            <person name="Mayes R."/>
            <person name="Keating L."/>
            <person name="Wheeler P.R."/>
            <person name="Parkhill J."/>
            <person name="Barrell B.G."/>
            <person name="Cole S.T."/>
            <person name="Gordon S.V."/>
            <person name="Hewinson R.G."/>
        </authorList>
    </citation>
    <scope>NUCLEOTIDE SEQUENCE [LARGE SCALE GENOMIC DNA]</scope>
    <source>
        <strain>ATCC BAA-935 / AF2122/97</strain>
    </source>
</reference>
<reference key="2">
    <citation type="journal article" date="2017" name="Genome Announc.">
        <title>Updated reference genome sequence and annotation of Mycobacterium bovis AF2122/97.</title>
        <authorList>
            <person name="Malone K.M."/>
            <person name="Farrell D."/>
            <person name="Stuber T.P."/>
            <person name="Schubert O.T."/>
            <person name="Aebersold R."/>
            <person name="Robbe-Austerman S."/>
            <person name="Gordon S.V."/>
        </authorList>
    </citation>
    <scope>NUCLEOTIDE SEQUENCE [LARGE SCALE GENOMIC DNA]</scope>
    <scope>GENOME REANNOTATION</scope>
    <source>
        <strain>ATCC BAA-935 / AF2122/97</strain>
    </source>
</reference>
<feature type="signal peptide" evidence="3">
    <location>
        <begin position="1"/>
        <end position="32"/>
    </location>
</feature>
<feature type="chain" id="PRO_0000032837" description="Superoxide dismutase [Cu-Zn]">
    <location>
        <begin position="33"/>
        <end position="240"/>
    </location>
</feature>
<feature type="region of interest" description="Disordered" evidence="2">
    <location>
        <begin position="36"/>
        <end position="77"/>
    </location>
</feature>
<feature type="compositionally biased region" description="Polar residues" evidence="2">
    <location>
        <begin position="36"/>
        <end position="51"/>
    </location>
</feature>
<feature type="compositionally biased region" description="Polar residues" evidence="2">
    <location>
        <begin position="68"/>
        <end position="77"/>
    </location>
</feature>
<feature type="binding site" evidence="1">
    <location>
        <position position="116"/>
    </location>
    <ligand>
        <name>Cu cation</name>
        <dbReference type="ChEBI" id="CHEBI:23378"/>
        <note>catalytic</note>
    </ligand>
</feature>
<feature type="binding site" evidence="1">
    <location>
        <position position="118"/>
    </location>
    <ligand>
        <name>Cu cation</name>
        <dbReference type="ChEBI" id="CHEBI:23378"/>
        <note>catalytic</note>
    </ligand>
</feature>
<feature type="binding site" evidence="1">
    <location>
        <position position="146"/>
    </location>
    <ligand>
        <name>Zn(2+)</name>
        <dbReference type="ChEBI" id="CHEBI:29105"/>
        <note>structural</note>
    </ligand>
</feature>
<feature type="binding site" evidence="1">
    <location>
        <position position="158"/>
    </location>
    <ligand>
        <name>Zn(2+)</name>
        <dbReference type="ChEBI" id="CHEBI:29105"/>
        <note>structural</note>
    </ligand>
</feature>
<feature type="binding site" evidence="1">
    <location>
        <position position="195"/>
    </location>
    <ligand>
        <name>Cu cation</name>
        <dbReference type="ChEBI" id="CHEBI:23378"/>
        <note>catalytic</note>
    </ligand>
</feature>
<feature type="lipid moiety-binding region" description="N-palmitoyl cysteine" evidence="3">
    <location>
        <position position="33"/>
    </location>
</feature>
<feature type="lipid moiety-binding region" description="S-diacylglycerol cysteine" evidence="3">
    <location>
        <position position="33"/>
    </location>
</feature>
<feature type="disulfide bond" evidence="1">
    <location>
        <begin position="123"/>
        <end position="234"/>
    </location>
</feature>
<protein>
    <recommendedName>
        <fullName>Superoxide dismutase [Cu-Zn]</fullName>
        <ecNumber>1.15.1.1</ecNumber>
    </recommendedName>
</protein>
<accession>P0A609</accession>
<accession>A0A1R3XVH6</accession>
<accession>P96278</accession>
<accession>X2BF16</accession>
<gene>
    <name type="primary">sodC</name>
    <name type="ordered locus">BQ2027_MB0440</name>
</gene>
<comment type="function">
    <text>Destroys radicals which are normally produced within the cells and which are toxic to biological systems. May play a role in favoring mycobacterial survival in phagocytes.</text>
</comment>
<comment type="catalytic activity">
    <reaction>
        <text>2 superoxide + 2 H(+) = H2O2 + O2</text>
        <dbReference type="Rhea" id="RHEA:20696"/>
        <dbReference type="ChEBI" id="CHEBI:15378"/>
        <dbReference type="ChEBI" id="CHEBI:15379"/>
        <dbReference type="ChEBI" id="CHEBI:16240"/>
        <dbReference type="ChEBI" id="CHEBI:18421"/>
        <dbReference type="EC" id="1.15.1.1"/>
    </reaction>
</comment>
<comment type="cofactor">
    <cofactor evidence="3">
        <name>Cu cation</name>
        <dbReference type="ChEBI" id="CHEBI:23378"/>
    </cofactor>
    <text evidence="3">Binds 1 copper ion per subunit.</text>
</comment>
<comment type="cofactor">
    <cofactor evidence="3">
        <name>Zn(2+)</name>
        <dbReference type="ChEBI" id="CHEBI:29105"/>
    </cofactor>
    <text evidence="3">Binds 1 zinc ion per subunit.</text>
</comment>
<comment type="activity regulation">
    <text>Inhibited by the copper chelator diethyl dithiocarbamate.</text>
</comment>
<comment type="subcellular location">
    <subcellularLocation>
        <location>Cell membrane</location>
        <topology>Lipid-anchor</topology>
    </subcellularLocation>
</comment>
<comment type="similarity">
    <text evidence="3">Belongs to the Cu-Zn superoxide dismutase family.</text>
</comment>
<comment type="caution">
    <text evidence="3">Lacks two conserved histidine residues that bind copper and zinc.</text>
</comment>
<evidence type="ECO:0000250" key="1"/>
<evidence type="ECO:0000256" key="2">
    <source>
        <dbReference type="SAM" id="MobiDB-lite"/>
    </source>
</evidence>
<evidence type="ECO:0000305" key="3"/>